<comment type="function">
    <text evidence="1">Involved in transcription antitermination. Required for transcription of ribosomal RNA (rRNA) genes. Binds specifically to the boxA antiterminator sequence of the ribosomal RNA (rrn) operons.</text>
</comment>
<comment type="similarity">
    <text evidence="1">Belongs to the NusB family.</text>
</comment>
<feature type="chain" id="PRO_1000023712" description="Transcription antitermination protein NusB">
    <location>
        <begin position="1"/>
        <end position="145"/>
    </location>
</feature>
<sequence length="145" mass="16015">MKKSARRQSRELATQGLYQWLLSNAAPGEIDAQLRGALGYDKADKELLDAILHGVIREHATLIEALTPSLDRPVDQLSPVERAVLLIATFELTHHVETPYRVIINEAVELAKTFGGSDGYKYVNGVLDKLAAKLRPAETQARRNG</sequence>
<protein>
    <recommendedName>
        <fullName evidence="1">Transcription antitermination protein NusB</fullName>
    </recommendedName>
    <alternativeName>
        <fullName evidence="1">Antitermination factor NusB</fullName>
    </alternativeName>
</protein>
<proteinExistence type="inferred from homology"/>
<name>NUSB_BURCM</name>
<accession>Q0BHJ8</accession>
<gene>
    <name evidence="1" type="primary">nusB</name>
    <name type="ordered locus">Bamb_0816</name>
</gene>
<dbReference type="EMBL" id="CP000440">
    <property type="protein sequence ID" value="ABI86375.1"/>
    <property type="molecule type" value="Genomic_DNA"/>
</dbReference>
<dbReference type="RefSeq" id="WP_006754954.1">
    <property type="nucleotide sequence ID" value="NZ_CP009798.1"/>
</dbReference>
<dbReference type="SMR" id="Q0BHJ8"/>
<dbReference type="GeneID" id="93083777"/>
<dbReference type="KEGG" id="bam:Bamb_0816"/>
<dbReference type="PATRIC" id="fig|339670.21.peg.769"/>
<dbReference type="eggNOG" id="COG0781">
    <property type="taxonomic scope" value="Bacteria"/>
</dbReference>
<dbReference type="Proteomes" id="UP000000662">
    <property type="component" value="Chromosome 1"/>
</dbReference>
<dbReference type="GO" id="GO:0005829">
    <property type="term" value="C:cytosol"/>
    <property type="evidence" value="ECO:0007669"/>
    <property type="project" value="TreeGrafter"/>
</dbReference>
<dbReference type="GO" id="GO:0003723">
    <property type="term" value="F:RNA binding"/>
    <property type="evidence" value="ECO:0007669"/>
    <property type="project" value="UniProtKB-UniRule"/>
</dbReference>
<dbReference type="GO" id="GO:0006353">
    <property type="term" value="P:DNA-templated transcription termination"/>
    <property type="evidence" value="ECO:0007669"/>
    <property type="project" value="UniProtKB-UniRule"/>
</dbReference>
<dbReference type="GO" id="GO:0031564">
    <property type="term" value="P:transcription antitermination"/>
    <property type="evidence" value="ECO:0007669"/>
    <property type="project" value="UniProtKB-KW"/>
</dbReference>
<dbReference type="Gene3D" id="1.10.940.10">
    <property type="entry name" value="NusB-like"/>
    <property type="match status" value="1"/>
</dbReference>
<dbReference type="HAMAP" id="MF_00073">
    <property type="entry name" value="NusB"/>
    <property type="match status" value="1"/>
</dbReference>
<dbReference type="InterPro" id="IPR035926">
    <property type="entry name" value="NusB-like_sf"/>
</dbReference>
<dbReference type="InterPro" id="IPR011605">
    <property type="entry name" value="NusB_fam"/>
</dbReference>
<dbReference type="InterPro" id="IPR006027">
    <property type="entry name" value="NusB_RsmB_TIM44"/>
</dbReference>
<dbReference type="NCBIfam" id="TIGR01951">
    <property type="entry name" value="nusB"/>
    <property type="match status" value="1"/>
</dbReference>
<dbReference type="PANTHER" id="PTHR11078:SF3">
    <property type="entry name" value="ANTITERMINATION NUSB DOMAIN-CONTAINING PROTEIN"/>
    <property type="match status" value="1"/>
</dbReference>
<dbReference type="PANTHER" id="PTHR11078">
    <property type="entry name" value="N UTILIZATION SUBSTANCE PROTEIN B-RELATED"/>
    <property type="match status" value="1"/>
</dbReference>
<dbReference type="Pfam" id="PF01029">
    <property type="entry name" value="NusB"/>
    <property type="match status" value="1"/>
</dbReference>
<dbReference type="SUPFAM" id="SSF48013">
    <property type="entry name" value="NusB-like"/>
    <property type="match status" value="1"/>
</dbReference>
<reference key="1">
    <citation type="submission" date="2006-08" db="EMBL/GenBank/DDBJ databases">
        <title>Complete sequence of chromosome 1 of Burkholderia cepacia AMMD.</title>
        <authorList>
            <person name="Copeland A."/>
            <person name="Lucas S."/>
            <person name="Lapidus A."/>
            <person name="Barry K."/>
            <person name="Detter J.C."/>
            <person name="Glavina del Rio T."/>
            <person name="Hammon N."/>
            <person name="Israni S."/>
            <person name="Pitluck S."/>
            <person name="Bruce D."/>
            <person name="Chain P."/>
            <person name="Malfatti S."/>
            <person name="Shin M."/>
            <person name="Vergez L."/>
            <person name="Schmutz J."/>
            <person name="Larimer F."/>
            <person name="Land M."/>
            <person name="Hauser L."/>
            <person name="Kyrpides N."/>
            <person name="Kim E."/>
            <person name="Parke J."/>
            <person name="Coenye T."/>
            <person name="Konstantinidis K."/>
            <person name="Ramette A."/>
            <person name="Tiedje J."/>
            <person name="Richardson P."/>
        </authorList>
    </citation>
    <scope>NUCLEOTIDE SEQUENCE [LARGE SCALE GENOMIC DNA]</scope>
    <source>
        <strain>ATCC BAA-244 / DSM 16087 / CCUG 44356 / LMG 19182 / AMMD</strain>
    </source>
</reference>
<organism>
    <name type="scientific">Burkholderia ambifaria (strain ATCC BAA-244 / DSM 16087 / CCUG 44356 / LMG 19182 / AMMD)</name>
    <name type="common">Burkholderia cepacia (strain AMMD)</name>
    <dbReference type="NCBI Taxonomy" id="339670"/>
    <lineage>
        <taxon>Bacteria</taxon>
        <taxon>Pseudomonadati</taxon>
        <taxon>Pseudomonadota</taxon>
        <taxon>Betaproteobacteria</taxon>
        <taxon>Burkholderiales</taxon>
        <taxon>Burkholderiaceae</taxon>
        <taxon>Burkholderia</taxon>
        <taxon>Burkholderia cepacia complex</taxon>
    </lineage>
</organism>
<evidence type="ECO:0000255" key="1">
    <source>
        <dbReference type="HAMAP-Rule" id="MF_00073"/>
    </source>
</evidence>
<keyword id="KW-0694">RNA-binding</keyword>
<keyword id="KW-0804">Transcription</keyword>
<keyword id="KW-0889">Transcription antitermination</keyword>
<keyword id="KW-0805">Transcription regulation</keyword>